<protein>
    <recommendedName>
        <fullName evidence="1">Glutamyl-tRNA reductase</fullName>
        <shortName evidence="1">GluTR</shortName>
        <ecNumber evidence="1">1.2.1.70</ecNumber>
    </recommendedName>
</protein>
<sequence>MPELFTIPLALAGISHHAADIATLEAFRFPDEAAFLHEARERFRGVLLLQTCNRIEVLVQGDARSLEGFLQEKGRHGFTVIEGEAVPRHLLELAAGIDSLIVGEDQILGQLKQALAAAEEAGTCCSAIGLCIKKAVHAGVRVRRQTQINRGAVSVGSAAVTLAENLLGTLRDRHILVVGSGEMGVLVAQALAARGLTAIYVANRTYERAVMLADKIGGRAVNFKDLYRYIALSDVVISCTAAPHPVIRTEDIRAVMEERLWPLDTHPRHLILIDIAQPRDVEEGVRSIEGVHLFTIDDLRNVNDATMESRRSEADRARGIIDEEAEHFVRLLRRAAADETLALLYTWAESIRARERDRALARLRERDDRTAEVIDDLTHALTNKILSDVTTAIRACAECGDITTAEALMRAITRGEPCFQNEE</sequence>
<accession>A3CU63</accession>
<feature type="chain" id="PRO_0000335092" description="Glutamyl-tRNA reductase">
    <location>
        <begin position="1"/>
        <end position="423"/>
    </location>
</feature>
<feature type="active site" description="Nucleophile" evidence="1">
    <location>
        <position position="52"/>
    </location>
</feature>
<feature type="binding site" evidence="1">
    <location>
        <begin position="51"/>
        <end position="54"/>
    </location>
    <ligand>
        <name>substrate</name>
    </ligand>
</feature>
<feature type="binding site" evidence="1">
    <location>
        <position position="99"/>
    </location>
    <ligand>
        <name>substrate</name>
    </ligand>
</feature>
<feature type="binding site" evidence="1">
    <location>
        <begin position="104"/>
        <end position="106"/>
    </location>
    <ligand>
        <name>substrate</name>
    </ligand>
</feature>
<feature type="binding site" evidence="1">
    <location>
        <position position="110"/>
    </location>
    <ligand>
        <name>substrate</name>
    </ligand>
</feature>
<feature type="binding site" evidence="1">
    <location>
        <begin position="179"/>
        <end position="184"/>
    </location>
    <ligand>
        <name>NADP(+)</name>
        <dbReference type="ChEBI" id="CHEBI:58349"/>
    </ligand>
</feature>
<feature type="site" description="Important for activity" evidence="1">
    <location>
        <position position="89"/>
    </location>
</feature>
<gene>
    <name evidence="1" type="primary">hemA</name>
    <name type="ordered locus">Memar_0980</name>
</gene>
<organism>
    <name type="scientific">Methanoculleus marisnigri (strain ATCC 35101 / DSM 1498 / JR1)</name>
    <dbReference type="NCBI Taxonomy" id="368407"/>
    <lineage>
        <taxon>Archaea</taxon>
        <taxon>Methanobacteriati</taxon>
        <taxon>Methanobacteriota</taxon>
        <taxon>Stenosarchaea group</taxon>
        <taxon>Methanomicrobia</taxon>
        <taxon>Methanomicrobiales</taxon>
        <taxon>Methanomicrobiaceae</taxon>
        <taxon>Methanoculleus</taxon>
    </lineage>
</organism>
<dbReference type="EC" id="1.2.1.70" evidence="1"/>
<dbReference type="EMBL" id="CP000562">
    <property type="protein sequence ID" value="ABN56913.1"/>
    <property type="molecule type" value="Genomic_DNA"/>
</dbReference>
<dbReference type="RefSeq" id="WP_011843824.1">
    <property type="nucleotide sequence ID" value="NC_009051.1"/>
</dbReference>
<dbReference type="SMR" id="A3CU63"/>
<dbReference type="STRING" id="368407.Memar_0980"/>
<dbReference type="GeneID" id="4847471"/>
<dbReference type="GeneID" id="76731552"/>
<dbReference type="KEGG" id="mem:Memar_0980"/>
<dbReference type="eggNOG" id="arCOG01036">
    <property type="taxonomic scope" value="Archaea"/>
</dbReference>
<dbReference type="HOGENOM" id="CLU_035113_2_2_2"/>
<dbReference type="OrthoDB" id="4562at2157"/>
<dbReference type="UniPathway" id="UPA00251">
    <property type="reaction ID" value="UER00316"/>
</dbReference>
<dbReference type="Proteomes" id="UP000002146">
    <property type="component" value="Chromosome"/>
</dbReference>
<dbReference type="GO" id="GO:0008883">
    <property type="term" value="F:glutamyl-tRNA reductase activity"/>
    <property type="evidence" value="ECO:0007669"/>
    <property type="project" value="UniProtKB-UniRule"/>
</dbReference>
<dbReference type="GO" id="GO:0050661">
    <property type="term" value="F:NADP binding"/>
    <property type="evidence" value="ECO:0007669"/>
    <property type="project" value="InterPro"/>
</dbReference>
<dbReference type="GO" id="GO:0019353">
    <property type="term" value="P:protoporphyrinogen IX biosynthetic process from glutamate"/>
    <property type="evidence" value="ECO:0007669"/>
    <property type="project" value="TreeGrafter"/>
</dbReference>
<dbReference type="CDD" id="cd05213">
    <property type="entry name" value="NAD_bind_Glutamyl_tRNA_reduct"/>
    <property type="match status" value="1"/>
</dbReference>
<dbReference type="FunFam" id="3.40.50.720:FF:000031">
    <property type="entry name" value="Glutamyl-tRNA reductase"/>
    <property type="match status" value="1"/>
</dbReference>
<dbReference type="Gene3D" id="3.30.460.30">
    <property type="entry name" value="Glutamyl-tRNA reductase, N-terminal domain"/>
    <property type="match status" value="1"/>
</dbReference>
<dbReference type="Gene3D" id="3.40.50.720">
    <property type="entry name" value="NAD(P)-binding Rossmann-like Domain"/>
    <property type="match status" value="1"/>
</dbReference>
<dbReference type="HAMAP" id="MF_00087">
    <property type="entry name" value="Glu_tRNA_reductase"/>
    <property type="match status" value="1"/>
</dbReference>
<dbReference type="InterPro" id="IPR000343">
    <property type="entry name" value="4pyrrol_synth_GluRdtase"/>
</dbReference>
<dbReference type="InterPro" id="IPR015896">
    <property type="entry name" value="4pyrrol_synth_GluRdtase_dimer"/>
</dbReference>
<dbReference type="InterPro" id="IPR015895">
    <property type="entry name" value="4pyrrol_synth_GluRdtase_N"/>
</dbReference>
<dbReference type="InterPro" id="IPR018214">
    <property type="entry name" value="GluRdtase_CS"/>
</dbReference>
<dbReference type="InterPro" id="IPR036453">
    <property type="entry name" value="GluRdtase_dimer_dom_sf"/>
</dbReference>
<dbReference type="InterPro" id="IPR036343">
    <property type="entry name" value="GluRdtase_N_sf"/>
</dbReference>
<dbReference type="InterPro" id="IPR036291">
    <property type="entry name" value="NAD(P)-bd_dom_sf"/>
</dbReference>
<dbReference type="InterPro" id="IPR006151">
    <property type="entry name" value="Shikm_DH/Glu-tRNA_Rdtase"/>
</dbReference>
<dbReference type="NCBIfam" id="TIGR01035">
    <property type="entry name" value="hemA"/>
    <property type="match status" value="1"/>
</dbReference>
<dbReference type="PANTHER" id="PTHR43013">
    <property type="entry name" value="GLUTAMYL-TRNA REDUCTASE"/>
    <property type="match status" value="1"/>
</dbReference>
<dbReference type="PANTHER" id="PTHR43013:SF1">
    <property type="entry name" value="GLUTAMYL-TRNA REDUCTASE"/>
    <property type="match status" value="1"/>
</dbReference>
<dbReference type="Pfam" id="PF00745">
    <property type="entry name" value="GlutR_dimer"/>
    <property type="match status" value="1"/>
</dbReference>
<dbReference type="Pfam" id="PF05201">
    <property type="entry name" value="GlutR_N"/>
    <property type="match status" value="1"/>
</dbReference>
<dbReference type="Pfam" id="PF01488">
    <property type="entry name" value="Shikimate_DH"/>
    <property type="match status" value="1"/>
</dbReference>
<dbReference type="PIRSF" id="PIRSF000445">
    <property type="entry name" value="4pyrrol_synth_GluRdtase"/>
    <property type="match status" value="1"/>
</dbReference>
<dbReference type="SUPFAM" id="SSF69742">
    <property type="entry name" value="Glutamyl tRNA-reductase catalytic, N-terminal domain"/>
    <property type="match status" value="1"/>
</dbReference>
<dbReference type="SUPFAM" id="SSF69075">
    <property type="entry name" value="Glutamyl tRNA-reductase dimerization domain"/>
    <property type="match status" value="1"/>
</dbReference>
<dbReference type="SUPFAM" id="SSF51735">
    <property type="entry name" value="NAD(P)-binding Rossmann-fold domains"/>
    <property type="match status" value="1"/>
</dbReference>
<dbReference type="PROSITE" id="PS00747">
    <property type="entry name" value="GLUTR"/>
    <property type="match status" value="1"/>
</dbReference>
<comment type="function">
    <text evidence="1">Catalyzes the NADPH-dependent reduction of glutamyl-tRNA(Glu) to glutamate 1-semialdehyde (GSA).</text>
</comment>
<comment type="catalytic activity">
    <reaction evidence="1">
        <text>(S)-4-amino-5-oxopentanoate + tRNA(Glu) + NADP(+) = L-glutamyl-tRNA(Glu) + NADPH + H(+)</text>
        <dbReference type="Rhea" id="RHEA:12344"/>
        <dbReference type="Rhea" id="RHEA-COMP:9663"/>
        <dbReference type="Rhea" id="RHEA-COMP:9680"/>
        <dbReference type="ChEBI" id="CHEBI:15378"/>
        <dbReference type="ChEBI" id="CHEBI:57501"/>
        <dbReference type="ChEBI" id="CHEBI:57783"/>
        <dbReference type="ChEBI" id="CHEBI:58349"/>
        <dbReference type="ChEBI" id="CHEBI:78442"/>
        <dbReference type="ChEBI" id="CHEBI:78520"/>
        <dbReference type="EC" id="1.2.1.70"/>
    </reaction>
</comment>
<comment type="pathway">
    <text evidence="1">Porphyrin-containing compound metabolism; protoporphyrin-IX biosynthesis; 5-aminolevulinate from L-glutamyl-tRNA(Glu): step 1/2.</text>
</comment>
<comment type="subunit">
    <text evidence="1">Homodimer.</text>
</comment>
<comment type="domain">
    <text evidence="1">Possesses an unusual extended V-shaped dimeric structure with each monomer consisting of three distinct domains arranged along a curved 'spinal' alpha-helix. The N-terminal catalytic domain specifically recognizes the glutamate moiety of the substrate. The second domain is the NADPH-binding domain, and the third C-terminal domain is responsible for dimerization.</text>
</comment>
<comment type="miscellaneous">
    <text evidence="1">During catalysis, the active site Cys acts as a nucleophile attacking the alpha-carbonyl group of tRNA-bound glutamate with the formation of a thioester intermediate between enzyme and glutamate, and the concomitant release of tRNA(Glu). The thioester intermediate is finally reduced by direct hydride transfer from NADPH, to form the product GSA.</text>
</comment>
<comment type="similarity">
    <text evidence="1">Belongs to the glutamyl-tRNA reductase family.</text>
</comment>
<evidence type="ECO:0000255" key="1">
    <source>
        <dbReference type="HAMAP-Rule" id="MF_00087"/>
    </source>
</evidence>
<name>HEM1_METMJ</name>
<keyword id="KW-0521">NADP</keyword>
<keyword id="KW-0560">Oxidoreductase</keyword>
<keyword id="KW-0627">Porphyrin biosynthesis</keyword>
<reference key="1">
    <citation type="journal article" date="2009" name="Stand. Genomic Sci.">
        <title>Complete genome sequence of Methanoculleus marisnigri Romesser et al. 1981 type strain JR1.</title>
        <authorList>
            <person name="Anderson I.J."/>
            <person name="Sieprawska-Lupa M."/>
            <person name="Lapidus A."/>
            <person name="Nolan M."/>
            <person name="Copeland A."/>
            <person name="Glavina Del Rio T."/>
            <person name="Tice H."/>
            <person name="Dalin E."/>
            <person name="Barry K."/>
            <person name="Saunders E."/>
            <person name="Han C."/>
            <person name="Brettin T."/>
            <person name="Detter J.C."/>
            <person name="Bruce D."/>
            <person name="Mikhailova N."/>
            <person name="Pitluck S."/>
            <person name="Hauser L."/>
            <person name="Land M."/>
            <person name="Lucas S."/>
            <person name="Richardson P."/>
            <person name="Whitman W.B."/>
            <person name="Kyrpides N.C."/>
        </authorList>
    </citation>
    <scope>NUCLEOTIDE SEQUENCE [LARGE SCALE GENOMIC DNA]</scope>
    <source>
        <strain>ATCC 35101 / DSM 1498 / JR1</strain>
    </source>
</reference>
<proteinExistence type="inferred from homology"/>